<geneLocation type="mitochondrion"/>
<gene>
    <name type="primary">MT-CYB</name>
    <name type="synonym">COB</name>
    <name type="synonym">CYTB</name>
    <name type="synonym">MTCYB</name>
</gene>
<name>CYB_CTEST</name>
<keyword id="KW-0249">Electron transport</keyword>
<keyword id="KW-0349">Heme</keyword>
<keyword id="KW-0408">Iron</keyword>
<keyword id="KW-0472">Membrane</keyword>
<keyword id="KW-0479">Metal-binding</keyword>
<keyword id="KW-0496">Mitochondrion</keyword>
<keyword id="KW-0999">Mitochondrion inner membrane</keyword>
<keyword id="KW-0679">Respiratory chain</keyword>
<keyword id="KW-0812">Transmembrane</keyword>
<keyword id="KW-1133">Transmembrane helix</keyword>
<keyword id="KW-0813">Transport</keyword>
<keyword id="KW-0830">Ubiquinone</keyword>
<sequence>MTNTRKSHPLIKIVNHSFIDLPTPSNISTWWNFGSLLGVCLGLQILTGLFLAMHYIADTTTAFSSVTHICRDVNYGWLIRYMHANGASMFFIFLYFHIGRGIYYGSYTFMDTWNIGILLLFAVMATAFMGYVLPWGQMSFWGATVITNLLSAIPYIGPTLVEWIWGGFSVDKATLTRFFALHFILPFIITAMVMIHLLFLHETGSNNPSGMNSDSDKIPFHPYYTIKDILGVLFMMITLTSLVMFTPDLLGDPDNYTPANPLNTPPHIKPEWYFLFAYAILRSIPNKLGGVLALAFSILILTLFPILHSSKQRSMSFRPLSQCLMWMLVANLLILTWIGGQPVEHPFITIGQLASMTYFFTILILMPSTALMENKLLKW</sequence>
<dbReference type="EMBL" id="AF007043">
    <property type="protein sequence ID" value="AAB69202.1"/>
    <property type="molecule type" value="Genomic_DNA"/>
</dbReference>
<dbReference type="EMBL" id="AF007044">
    <property type="protein sequence ID" value="AAB69203.1"/>
    <property type="molecule type" value="Genomic_DNA"/>
</dbReference>
<dbReference type="SMR" id="O21816"/>
<dbReference type="GO" id="GO:0005743">
    <property type="term" value="C:mitochondrial inner membrane"/>
    <property type="evidence" value="ECO:0007669"/>
    <property type="project" value="UniProtKB-SubCell"/>
</dbReference>
<dbReference type="GO" id="GO:0045275">
    <property type="term" value="C:respiratory chain complex III"/>
    <property type="evidence" value="ECO:0007669"/>
    <property type="project" value="InterPro"/>
</dbReference>
<dbReference type="GO" id="GO:0046872">
    <property type="term" value="F:metal ion binding"/>
    <property type="evidence" value="ECO:0007669"/>
    <property type="project" value="UniProtKB-KW"/>
</dbReference>
<dbReference type="GO" id="GO:0008121">
    <property type="term" value="F:ubiquinol-cytochrome-c reductase activity"/>
    <property type="evidence" value="ECO:0007669"/>
    <property type="project" value="InterPro"/>
</dbReference>
<dbReference type="GO" id="GO:0006122">
    <property type="term" value="P:mitochondrial electron transport, ubiquinol to cytochrome c"/>
    <property type="evidence" value="ECO:0007669"/>
    <property type="project" value="TreeGrafter"/>
</dbReference>
<dbReference type="CDD" id="cd00290">
    <property type="entry name" value="cytochrome_b_C"/>
    <property type="match status" value="1"/>
</dbReference>
<dbReference type="CDD" id="cd00284">
    <property type="entry name" value="Cytochrome_b_N"/>
    <property type="match status" value="1"/>
</dbReference>
<dbReference type="FunFam" id="1.20.810.10:FF:000002">
    <property type="entry name" value="Cytochrome b"/>
    <property type="match status" value="1"/>
</dbReference>
<dbReference type="Gene3D" id="1.20.810.10">
    <property type="entry name" value="Cytochrome Bc1 Complex, Chain C"/>
    <property type="match status" value="1"/>
</dbReference>
<dbReference type="InterPro" id="IPR005798">
    <property type="entry name" value="Cyt_b/b6_C"/>
</dbReference>
<dbReference type="InterPro" id="IPR036150">
    <property type="entry name" value="Cyt_b/b6_C_sf"/>
</dbReference>
<dbReference type="InterPro" id="IPR005797">
    <property type="entry name" value="Cyt_b/b6_N"/>
</dbReference>
<dbReference type="InterPro" id="IPR027387">
    <property type="entry name" value="Cytb/b6-like_sf"/>
</dbReference>
<dbReference type="InterPro" id="IPR030689">
    <property type="entry name" value="Cytochrome_b"/>
</dbReference>
<dbReference type="InterPro" id="IPR048260">
    <property type="entry name" value="Cytochrome_b_C_euk/bac"/>
</dbReference>
<dbReference type="InterPro" id="IPR048259">
    <property type="entry name" value="Cytochrome_b_N_euk/bac"/>
</dbReference>
<dbReference type="InterPro" id="IPR016174">
    <property type="entry name" value="Di-haem_cyt_TM"/>
</dbReference>
<dbReference type="PANTHER" id="PTHR19271">
    <property type="entry name" value="CYTOCHROME B"/>
    <property type="match status" value="1"/>
</dbReference>
<dbReference type="PANTHER" id="PTHR19271:SF16">
    <property type="entry name" value="CYTOCHROME B"/>
    <property type="match status" value="1"/>
</dbReference>
<dbReference type="Pfam" id="PF00032">
    <property type="entry name" value="Cytochrom_B_C"/>
    <property type="match status" value="1"/>
</dbReference>
<dbReference type="Pfam" id="PF00033">
    <property type="entry name" value="Cytochrome_B"/>
    <property type="match status" value="1"/>
</dbReference>
<dbReference type="PIRSF" id="PIRSF038885">
    <property type="entry name" value="COB"/>
    <property type="match status" value="1"/>
</dbReference>
<dbReference type="SUPFAM" id="SSF81648">
    <property type="entry name" value="a domain/subunit of cytochrome bc1 complex (Ubiquinol-cytochrome c reductase)"/>
    <property type="match status" value="1"/>
</dbReference>
<dbReference type="SUPFAM" id="SSF81342">
    <property type="entry name" value="Transmembrane di-heme cytochromes"/>
    <property type="match status" value="1"/>
</dbReference>
<dbReference type="PROSITE" id="PS51003">
    <property type="entry name" value="CYTB_CTER"/>
    <property type="match status" value="1"/>
</dbReference>
<dbReference type="PROSITE" id="PS51002">
    <property type="entry name" value="CYTB_NTER"/>
    <property type="match status" value="1"/>
</dbReference>
<protein>
    <recommendedName>
        <fullName>Cytochrome b</fullName>
    </recommendedName>
    <alternativeName>
        <fullName>Complex III subunit 3</fullName>
    </alternativeName>
    <alternativeName>
        <fullName>Complex III subunit III</fullName>
    </alternativeName>
    <alternativeName>
        <fullName>Cytochrome b-c1 complex subunit 3</fullName>
    </alternativeName>
    <alternativeName>
        <fullName>Ubiquinol-cytochrome-c reductase complex cytochrome b subunit</fullName>
    </alternativeName>
</protein>
<accession>O21816</accession>
<reference key="1">
    <citation type="journal article" date="1998" name="Mol. Phylogenet. Evol.">
        <title>The molecular phylogenetics of tuco-tucos (genus Ctenomys, Rodentia: Octodontidae) suggests an early burst of speciation.</title>
        <authorList>
            <person name="Lessa E.P."/>
            <person name="Cook J.A."/>
        </authorList>
    </citation>
    <scope>NUCLEOTIDE SEQUENCE [GENOMIC DNA]</scope>
</reference>
<comment type="function">
    <text evidence="2">Component of the ubiquinol-cytochrome c reductase complex (complex III or cytochrome b-c1 complex) that is part of the mitochondrial respiratory chain. The b-c1 complex mediates electron transfer from ubiquinol to cytochrome c. Contributes to the generation of a proton gradient across the mitochondrial membrane that is then used for ATP synthesis.</text>
</comment>
<comment type="cofactor">
    <cofactor evidence="2">
        <name>heme b</name>
        <dbReference type="ChEBI" id="CHEBI:60344"/>
    </cofactor>
    <text evidence="2">Binds 2 heme b groups non-covalently.</text>
</comment>
<comment type="subunit">
    <text evidence="2">The cytochrome bc1 complex contains 11 subunits: 3 respiratory subunits (MT-CYB, CYC1 and UQCRFS1), 2 core proteins (UQCRC1 and UQCRC2) and 6 low-molecular weight proteins (UQCRH/QCR6, UQCRB/QCR7, UQCRQ/QCR8, UQCR10/QCR9, UQCR11/QCR10 and a cleavage product of UQCRFS1). This cytochrome bc1 complex then forms a dimer.</text>
</comment>
<comment type="subcellular location">
    <subcellularLocation>
        <location evidence="2">Mitochondrion inner membrane</location>
        <topology evidence="2">Multi-pass membrane protein</topology>
    </subcellularLocation>
</comment>
<comment type="miscellaneous">
    <text evidence="1">Heme 1 (or BL or b562) is low-potential and absorbs at about 562 nm, and heme 2 (or BH or b566) is high-potential and absorbs at about 566 nm.</text>
</comment>
<comment type="similarity">
    <text evidence="3 4">Belongs to the cytochrome b family.</text>
</comment>
<comment type="caution">
    <text evidence="2">The full-length protein contains only eight transmembrane helices, not nine as predicted by bioinformatics tools.</text>
</comment>
<feature type="chain" id="PRO_0000255028" description="Cytochrome b">
    <location>
        <begin position="1"/>
        <end position="379"/>
    </location>
</feature>
<feature type="transmembrane region" description="Helical" evidence="2">
    <location>
        <begin position="33"/>
        <end position="53"/>
    </location>
</feature>
<feature type="transmembrane region" description="Helical" evidence="2">
    <location>
        <begin position="77"/>
        <end position="98"/>
    </location>
</feature>
<feature type="transmembrane region" description="Helical" evidence="2">
    <location>
        <begin position="113"/>
        <end position="133"/>
    </location>
</feature>
<feature type="transmembrane region" description="Helical" evidence="2">
    <location>
        <begin position="178"/>
        <end position="198"/>
    </location>
</feature>
<feature type="transmembrane region" description="Helical" evidence="2">
    <location>
        <begin position="226"/>
        <end position="246"/>
    </location>
</feature>
<feature type="transmembrane region" description="Helical" evidence="2">
    <location>
        <begin position="288"/>
        <end position="308"/>
    </location>
</feature>
<feature type="transmembrane region" description="Helical" evidence="2">
    <location>
        <begin position="320"/>
        <end position="340"/>
    </location>
</feature>
<feature type="transmembrane region" description="Helical" evidence="2">
    <location>
        <begin position="347"/>
        <end position="367"/>
    </location>
</feature>
<feature type="binding site" description="axial binding residue" evidence="2">
    <location>
        <position position="83"/>
    </location>
    <ligand>
        <name>heme b</name>
        <dbReference type="ChEBI" id="CHEBI:60344"/>
        <label>b562</label>
    </ligand>
    <ligandPart>
        <name>Fe</name>
        <dbReference type="ChEBI" id="CHEBI:18248"/>
    </ligandPart>
</feature>
<feature type="binding site" description="axial binding residue" evidence="2">
    <location>
        <position position="97"/>
    </location>
    <ligand>
        <name>heme b</name>
        <dbReference type="ChEBI" id="CHEBI:60344"/>
        <label>b566</label>
    </ligand>
    <ligandPart>
        <name>Fe</name>
        <dbReference type="ChEBI" id="CHEBI:18248"/>
    </ligandPart>
</feature>
<feature type="binding site" description="axial binding residue" evidence="2">
    <location>
        <position position="182"/>
    </location>
    <ligand>
        <name>heme b</name>
        <dbReference type="ChEBI" id="CHEBI:60344"/>
        <label>b562</label>
    </ligand>
    <ligandPart>
        <name>Fe</name>
        <dbReference type="ChEBI" id="CHEBI:18248"/>
    </ligandPart>
</feature>
<feature type="binding site" description="axial binding residue" evidence="2">
    <location>
        <position position="196"/>
    </location>
    <ligand>
        <name>heme b</name>
        <dbReference type="ChEBI" id="CHEBI:60344"/>
        <label>b566</label>
    </ligand>
    <ligandPart>
        <name>Fe</name>
        <dbReference type="ChEBI" id="CHEBI:18248"/>
    </ligandPart>
</feature>
<feature type="binding site" evidence="2">
    <location>
        <position position="201"/>
    </location>
    <ligand>
        <name>a ubiquinone</name>
        <dbReference type="ChEBI" id="CHEBI:16389"/>
    </ligand>
</feature>
<organism>
    <name type="scientific">Ctenomys steinbachi</name>
    <name type="common">Steinbach's tuco-tuco</name>
    <dbReference type="NCBI Taxonomy" id="61878"/>
    <lineage>
        <taxon>Eukaryota</taxon>
        <taxon>Metazoa</taxon>
        <taxon>Chordata</taxon>
        <taxon>Craniata</taxon>
        <taxon>Vertebrata</taxon>
        <taxon>Euteleostomi</taxon>
        <taxon>Mammalia</taxon>
        <taxon>Eutheria</taxon>
        <taxon>Euarchontoglires</taxon>
        <taxon>Glires</taxon>
        <taxon>Rodentia</taxon>
        <taxon>Hystricomorpha</taxon>
        <taxon>Ctenomyidae</taxon>
        <taxon>Ctenomys</taxon>
    </lineage>
</organism>
<proteinExistence type="inferred from homology"/>
<evidence type="ECO:0000250" key="1"/>
<evidence type="ECO:0000250" key="2">
    <source>
        <dbReference type="UniProtKB" id="P00157"/>
    </source>
</evidence>
<evidence type="ECO:0000255" key="3">
    <source>
        <dbReference type="PROSITE-ProRule" id="PRU00967"/>
    </source>
</evidence>
<evidence type="ECO:0000255" key="4">
    <source>
        <dbReference type="PROSITE-ProRule" id="PRU00968"/>
    </source>
</evidence>